<accession>C4KIJ7</accession>
<organism>
    <name type="scientific">Saccharolobus islandicus (strain M.16.4 / Kamchatka #3)</name>
    <name type="common">Sulfolobus islandicus</name>
    <dbReference type="NCBI Taxonomy" id="426118"/>
    <lineage>
        <taxon>Archaea</taxon>
        <taxon>Thermoproteota</taxon>
        <taxon>Thermoprotei</taxon>
        <taxon>Sulfolobales</taxon>
        <taxon>Sulfolobaceae</taxon>
        <taxon>Saccharolobus</taxon>
    </lineage>
</organism>
<gene>
    <name evidence="1" type="primary">rpl11</name>
    <name type="ordered locus">M164_1808</name>
</gene>
<evidence type="ECO:0000255" key="1">
    <source>
        <dbReference type="HAMAP-Rule" id="MF_00736"/>
    </source>
</evidence>
<evidence type="ECO:0000305" key="2"/>
<name>RL11_SACI6</name>
<sequence>MPTKSIKIMVEGGNVKPGPPLAPTLSQLGLNVGEVVKKLNEATSSFKGMSVPVTIEVDSNTKKYEIKVGIPTTTALLLKEAGASEPSGDPAHKKIGNLSLEQVIKIAIMKKPGLTTKSLKAAVKSMLGTAKSIGVTVENKDPKELVKEVEEGKYDDLLAKYENEWNEVKE</sequence>
<proteinExistence type="inferred from homology"/>
<feature type="chain" id="PRO_1000212789" description="Large ribosomal subunit protein uL11">
    <location>
        <begin position="1"/>
        <end position="170"/>
    </location>
</feature>
<reference key="1">
    <citation type="journal article" date="2009" name="Proc. Natl. Acad. Sci. U.S.A.">
        <title>Biogeography of the Sulfolobus islandicus pan-genome.</title>
        <authorList>
            <person name="Reno M.L."/>
            <person name="Held N.L."/>
            <person name="Fields C.J."/>
            <person name="Burke P.V."/>
            <person name="Whitaker R.J."/>
        </authorList>
    </citation>
    <scope>NUCLEOTIDE SEQUENCE [LARGE SCALE GENOMIC DNA]</scope>
    <source>
        <strain>M.16.4 / Kamchatka #3</strain>
    </source>
</reference>
<protein>
    <recommendedName>
        <fullName evidence="1">Large ribosomal subunit protein uL11</fullName>
    </recommendedName>
    <alternativeName>
        <fullName evidence="2">50S ribosomal protein L11</fullName>
    </alternativeName>
</protein>
<keyword id="KW-0687">Ribonucleoprotein</keyword>
<keyword id="KW-0689">Ribosomal protein</keyword>
<keyword id="KW-0694">RNA-binding</keyword>
<keyword id="KW-0699">rRNA-binding</keyword>
<comment type="function">
    <text evidence="1">Forms part of the ribosomal stalk which helps the ribosome interact with GTP-bound translation factors.</text>
</comment>
<comment type="subunit">
    <text evidence="1">Part of the ribosomal stalk of the 50S ribosomal subunit. Interacts with L10 and the large rRNA to form the base of the stalk. L10 forms an elongated spine to which L12 dimers bind in a sequential fashion forming a multimeric L10(L12)X complex.</text>
</comment>
<comment type="similarity">
    <text evidence="1">Belongs to the universal ribosomal protein uL11 family.</text>
</comment>
<dbReference type="EMBL" id="CP001402">
    <property type="protein sequence ID" value="ACR42411.1"/>
    <property type="molecule type" value="Genomic_DNA"/>
</dbReference>
<dbReference type="RefSeq" id="WP_012713968.1">
    <property type="nucleotide sequence ID" value="NC_012726.1"/>
</dbReference>
<dbReference type="SMR" id="C4KIJ7"/>
<dbReference type="GeneID" id="15298168"/>
<dbReference type="KEGG" id="sid:M164_1808"/>
<dbReference type="HOGENOM" id="CLU_074237_4_0_2"/>
<dbReference type="Proteomes" id="UP000001479">
    <property type="component" value="Chromosome"/>
</dbReference>
<dbReference type="GO" id="GO:0015934">
    <property type="term" value="C:large ribosomal subunit"/>
    <property type="evidence" value="ECO:0007669"/>
    <property type="project" value="TreeGrafter"/>
</dbReference>
<dbReference type="GO" id="GO:0070180">
    <property type="term" value="F:large ribosomal subunit rRNA binding"/>
    <property type="evidence" value="ECO:0007669"/>
    <property type="project" value="UniProtKB-UniRule"/>
</dbReference>
<dbReference type="GO" id="GO:0003735">
    <property type="term" value="F:structural constituent of ribosome"/>
    <property type="evidence" value="ECO:0007669"/>
    <property type="project" value="InterPro"/>
</dbReference>
<dbReference type="GO" id="GO:0006412">
    <property type="term" value="P:translation"/>
    <property type="evidence" value="ECO:0007669"/>
    <property type="project" value="UniProtKB-UniRule"/>
</dbReference>
<dbReference type="CDD" id="cd00349">
    <property type="entry name" value="Ribosomal_L11"/>
    <property type="match status" value="1"/>
</dbReference>
<dbReference type="FunFam" id="1.10.10.250:FF:000006">
    <property type="entry name" value="50S ribosomal protein L11"/>
    <property type="match status" value="1"/>
</dbReference>
<dbReference type="FunFam" id="3.30.1550.10:FF:000007">
    <property type="entry name" value="50S ribosomal protein L11"/>
    <property type="match status" value="1"/>
</dbReference>
<dbReference type="Gene3D" id="1.10.10.250">
    <property type="entry name" value="Ribosomal protein L11, C-terminal domain"/>
    <property type="match status" value="1"/>
</dbReference>
<dbReference type="Gene3D" id="3.30.1550.10">
    <property type="entry name" value="Ribosomal protein L11/L12, N-terminal domain"/>
    <property type="match status" value="1"/>
</dbReference>
<dbReference type="HAMAP" id="MF_00736">
    <property type="entry name" value="Ribosomal_uL11"/>
    <property type="match status" value="1"/>
</dbReference>
<dbReference type="InterPro" id="IPR000911">
    <property type="entry name" value="Ribosomal_uL11"/>
</dbReference>
<dbReference type="InterPro" id="IPR020783">
    <property type="entry name" value="Ribosomal_uL11_C"/>
</dbReference>
<dbReference type="InterPro" id="IPR036769">
    <property type="entry name" value="Ribosomal_uL11_C_sf"/>
</dbReference>
<dbReference type="InterPro" id="IPR020785">
    <property type="entry name" value="Ribosomal_uL11_CS"/>
</dbReference>
<dbReference type="InterPro" id="IPR020784">
    <property type="entry name" value="Ribosomal_uL11_N"/>
</dbReference>
<dbReference type="InterPro" id="IPR036796">
    <property type="entry name" value="Ribosomal_uL11_N_sf"/>
</dbReference>
<dbReference type="NCBIfam" id="NF002232">
    <property type="entry name" value="PRK01143.1"/>
    <property type="match status" value="1"/>
</dbReference>
<dbReference type="PANTHER" id="PTHR11661">
    <property type="entry name" value="60S RIBOSOMAL PROTEIN L12"/>
    <property type="match status" value="1"/>
</dbReference>
<dbReference type="PANTHER" id="PTHR11661:SF1">
    <property type="entry name" value="LARGE RIBOSOMAL SUBUNIT PROTEIN UL11M"/>
    <property type="match status" value="1"/>
</dbReference>
<dbReference type="Pfam" id="PF00298">
    <property type="entry name" value="Ribosomal_L11"/>
    <property type="match status" value="1"/>
</dbReference>
<dbReference type="Pfam" id="PF03946">
    <property type="entry name" value="Ribosomal_L11_N"/>
    <property type="match status" value="1"/>
</dbReference>
<dbReference type="SMART" id="SM00649">
    <property type="entry name" value="RL11"/>
    <property type="match status" value="1"/>
</dbReference>
<dbReference type="SUPFAM" id="SSF54747">
    <property type="entry name" value="Ribosomal L11/L12e N-terminal domain"/>
    <property type="match status" value="1"/>
</dbReference>
<dbReference type="SUPFAM" id="SSF46906">
    <property type="entry name" value="Ribosomal protein L11, C-terminal domain"/>
    <property type="match status" value="1"/>
</dbReference>
<dbReference type="PROSITE" id="PS00359">
    <property type="entry name" value="RIBOSOMAL_L11"/>
    <property type="match status" value="1"/>
</dbReference>